<sequence>MMFRTLDDANVQSKRVLVRVDLNVPMANGEVTDLTRIERIVPTIAELSRKGAKVILLAHFGRPKGVASDENSLKHVVKPLSKVLDHSVHFAEDCIGDKAKAAVDALKDGDVLLLENTRFHKGEEKNDPEFVQALAANGDLYVNDAFSAAHRAHASTEGLAHVLPAFAGRAMQAELEALEKGLGNPARPVVAIVGGAKVSTKLDLLSNLIEKVDALVIGGGMANTFLAAKGLDVGKSLCEHELASTAREIMAKAETTKCAIILPVDAVVGWHFAADTPHQTYGVDSVPGDAMILDAGELSTDLIASAIDDAATLVWNGPLGAFELRPFDTATVKVARHVAKRTKEGKLVSVGGGGDTVAALNHAGVADDFTYISTAGGAFLEWMEGKPLPGVDVLKK</sequence>
<gene>
    <name evidence="1" type="primary">pgk</name>
    <name type="ordered locus">BruAb1_1714</name>
</gene>
<name>PGK_BRUAB</name>
<comment type="catalytic activity">
    <reaction evidence="1">
        <text>(2R)-3-phosphoglycerate + ATP = (2R)-3-phospho-glyceroyl phosphate + ADP</text>
        <dbReference type="Rhea" id="RHEA:14801"/>
        <dbReference type="ChEBI" id="CHEBI:30616"/>
        <dbReference type="ChEBI" id="CHEBI:57604"/>
        <dbReference type="ChEBI" id="CHEBI:58272"/>
        <dbReference type="ChEBI" id="CHEBI:456216"/>
        <dbReference type="EC" id="2.7.2.3"/>
    </reaction>
</comment>
<comment type="pathway">
    <text evidence="1">Carbohydrate degradation; glycolysis; pyruvate from D-glyceraldehyde 3-phosphate: step 2/5.</text>
</comment>
<comment type="subunit">
    <text evidence="1">Monomer.</text>
</comment>
<comment type="subcellular location">
    <subcellularLocation>
        <location evidence="1">Cytoplasm</location>
    </subcellularLocation>
</comment>
<comment type="similarity">
    <text evidence="1">Belongs to the phosphoglycerate kinase family.</text>
</comment>
<comment type="sequence caution" evidence="2">
    <conflict type="erroneous initiation">
        <sequence resource="EMBL-CDS" id="AAX75033"/>
    </conflict>
</comment>
<keyword id="KW-0067">ATP-binding</keyword>
<keyword id="KW-0963">Cytoplasm</keyword>
<keyword id="KW-0324">Glycolysis</keyword>
<keyword id="KW-0418">Kinase</keyword>
<keyword id="KW-0547">Nucleotide-binding</keyword>
<keyword id="KW-0808">Transferase</keyword>
<protein>
    <recommendedName>
        <fullName evidence="1">Phosphoglycerate kinase</fullName>
        <ecNumber evidence="1">2.7.2.3</ecNumber>
    </recommendedName>
</protein>
<evidence type="ECO:0000255" key="1">
    <source>
        <dbReference type="HAMAP-Rule" id="MF_00145"/>
    </source>
</evidence>
<evidence type="ECO:0000305" key="2"/>
<organism>
    <name type="scientific">Brucella abortus biovar 1 (strain 9-941)</name>
    <dbReference type="NCBI Taxonomy" id="262698"/>
    <lineage>
        <taxon>Bacteria</taxon>
        <taxon>Pseudomonadati</taxon>
        <taxon>Pseudomonadota</taxon>
        <taxon>Alphaproteobacteria</taxon>
        <taxon>Hyphomicrobiales</taxon>
        <taxon>Brucellaceae</taxon>
        <taxon>Brucella/Ochrobactrum group</taxon>
        <taxon>Brucella</taxon>
    </lineage>
</organism>
<reference key="1">
    <citation type="submission" date="2000-04" db="EMBL/GenBank/DDBJ databases">
        <title>Molecular cloning and DNA sequence analysis of the phosphoglycerate kinase (pgk) from Brucella abortus.</title>
        <authorList>
            <person name="Rosinha G.M.S."/>
            <person name="Miyoshi A."/>
            <person name="Azevedo V."/>
            <person name="Campos E."/>
            <person name="Neto E.D."/>
            <person name="Oliveira S.C."/>
        </authorList>
    </citation>
    <scope>NUCLEOTIDE SEQUENCE [GENOMIC DNA]</scope>
</reference>
<reference key="2">
    <citation type="journal article" date="2005" name="J. Bacteriol.">
        <title>Completion of the genome sequence of Brucella abortus and comparison to the highly similar genomes of Brucella melitensis and Brucella suis.</title>
        <authorList>
            <person name="Halling S.M."/>
            <person name="Peterson-Burch B.D."/>
            <person name="Bricker B.J."/>
            <person name="Zuerner R.L."/>
            <person name="Qing Z."/>
            <person name="Li L.-L."/>
            <person name="Kapur V."/>
            <person name="Alt D.P."/>
            <person name="Olsen S.C."/>
        </authorList>
    </citation>
    <scope>NUCLEOTIDE SEQUENCE [LARGE SCALE GENOMIC DNA]</scope>
    <source>
        <strain>9-941</strain>
    </source>
</reference>
<dbReference type="EC" id="2.7.2.3" evidence="1"/>
<dbReference type="EMBL" id="AF256214">
    <property type="protein sequence ID" value="AAF71544.1"/>
    <property type="molecule type" value="Genomic_DNA"/>
</dbReference>
<dbReference type="EMBL" id="AE017223">
    <property type="protein sequence ID" value="AAX75033.1"/>
    <property type="status" value="ALT_INIT"/>
    <property type="molecule type" value="Genomic_DNA"/>
</dbReference>
<dbReference type="RefSeq" id="WP_002964816.1">
    <property type="nucleotide sequence ID" value="NC_006932.1"/>
</dbReference>
<dbReference type="SMR" id="Q9L560"/>
<dbReference type="EnsemblBacteria" id="AAX75033">
    <property type="protein sequence ID" value="AAX75033"/>
    <property type="gene ID" value="BruAb1_1714"/>
</dbReference>
<dbReference type="KEGG" id="bmb:BruAb1_1714"/>
<dbReference type="HOGENOM" id="CLU_025427_0_2_5"/>
<dbReference type="UniPathway" id="UPA00109">
    <property type="reaction ID" value="UER00185"/>
</dbReference>
<dbReference type="Proteomes" id="UP000000540">
    <property type="component" value="Chromosome I"/>
</dbReference>
<dbReference type="GO" id="GO:0005829">
    <property type="term" value="C:cytosol"/>
    <property type="evidence" value="ECO:0007669"/>
    <property type="project" value="TreeGrafter"/>
</dbReference>
<dbReference type="GO" id="GO:0043531">
    <property type="term" value="F:ADP binding"/>
    <property type="evidence" value="ECO:0007669"/>
    <property type="project" value="TreeGrafter"/>
</dbReference>
<dbReference type="GO" id="GO:0005524">
    <property type="term" value="F:ATP binding"/>
    <property type="evidence" value="ECO:0007669"/>
    <property type="project" value="UniProtKB-KW"/>
</dbReference>
<dbReference type="GO" id="GO:0004618">
    <property type="term" value="F:phosphoglycerate kinase activity"/>
    <property type="evidence" value="ECO:0007669"/>
    <property type="project" value="UniProtKB-UniRule"/>
</dbReference>
<dbReference type="GO" id="GO:0006094">
    <property type="term" value="P:gluconeogenesis"/>
    <property type="evidence" value="ECO:0007669"/>
    <property type="project" value="TreeGrafter"/>
</dbReference>
<dbReference type="GO" id="GO:0006096">
    <property type="term" value="P:glycolytic process"/>
    <property type="evidence" value="ECO:0007669"/>
    <property type="project" value="UniProtKB-UniRule"/>
</dbReference>
<dbReference type="FunFam" id="3.40.50.1260:FF:000006">
    <property type="entry name" value="Phosphoglycerate kinase"/>
    <property type="match status" value="1"/>
</dbReference>
<dbReference type="FunFam" id="3.40.50.1260:FF:000031">
    <property type="entry name" value="Phosphoglycerate kinase 1"/>
    <property type="match status" value="1"/>
</dbReference>
<dbReference type="Gene3D" id="3.40.50.1260">
    <property type="entry name" value="Phosphoglycerate kinase, N-terminal domain"/>
    <property type="match status" value="2"/>
</dbReference>
<dbReference type="HAMAP" id="MF_00145">
    <property type="entry name" value="Phosphoglyc_kinase"/>
    <property type="match status" value="1"/>
</dbReference>
<dbReference type="InterPro" id="IPR001576">
    <property type="entry name" value="Phosphoglycerate_kinase"/>
</dbReference>
<dbReference type="InterPro" id="IPR015911">
    <property type="entry name" value="Phosphoglycerate_kinase_CS"/>
</dbReference>
<dbReference type="InterPro" id="IPR015824">
    <property type="entry name" value="Phosphoglycerate_kinase_N"/>
</dbReference>
<dbReference type="InterPro" id="IPR036043">
    <property type="entry name" value="Phosphoglycerate_kinase_sf"/>
</dbReference>
<dbReference type="PANTHER" id="PTHR11406">
    <property type="entry name" value="PHOSPHOGLYCERATE KINASE"/>
    <property type="match status" value="1"/>
</dbReference>
<dbReference type="PANTHER" id="PTHR11406:SF23">
    <property type="entry name" value="PHOSPHOGLYCERATE KINASE 1, CHLOROPLASTIC-RELATED"/>
    <property type="match status" value="1"/>
</dbReference>
<dbReference type="Pfam" id="PF00162">
    <property type="entry name" value="PGK"/>
    <property type="match status" value="1"/>
</dbReference>
<dbReference type="PIRSF" id="PIRSF000724">
    <property type="entry name" value="Pgk"/>
    <property type="match status" value="1"/>
</dbReference>
<dbReference type="PRINTS" id="PR00477">
    <property type="entry name" value="PHGLYCKINASE"/>
</dbReference>
<dbReference type="SUPFAM" id="SSF53748">
    <property type="entry name" value="Phosphoglycerate kinase"/>
    <property type="match status" value="1"/>
</dbReference>
<dbReference type="PROSITE" id="PS00111">
    <property type="entry name" value="PGLYCERATE_KINASE"/>
    <property type="match status" value="1"/>
</dbReference>
<proteinExistence type="inferred from homology"/>
<accession>Q9L560</accession>
<accession>Q57BF1</accession>
<feature type="chain" id="PRO_0000145915" description="Phosphoglycerate kinase">
    <location>
        <begin position="1"/>
        <end position="396"/>
    </location>
</feature>
<feature type="binding site" evidence="1">
    <location>
        <begin position="21"/>
        <end position="23"/>
    </location>
    <ligand>
        <name>substrate</name>
    </ligand>
</feature>
<feature type="binding site" evidence="1">
    <location>
        <position position="36"/>
    </location>
    <ligand>
        <name>substrate</name>
    </ligand>
</feature>
<feature type="binding site" evidence="1">
    <location>
        <begin position="59"/>
        <end position="62"/>
    </location>
    <ligand>
        <name>substrate</name>
    </ligand>
</feature>
<feature type="binding site" evidence="1">
    <location>
        <position position="118"/>
    </location>
    <ligand>
        <name>substrate</name>
    </ligand>
</feature>
<feature type="binding site" evidence="1">
    <location>
        <position position="151"/>
    </location>
    <ligand>
        <name>substrate</name>
    </ligand>
</feature>
<feature type="binding site" evidence="1">
    <location>
        <position position="201"/>
    </location>
    <ligand>
        <name>ATP</name>
        <dbReference type="ChEBI" id="CHEBI:30616"/>
    </ligand>
</feature>
<feature type="binding site" evidence="1">
    <location>
        <position position="323"/>
    </location>
    <ligand>
        <name>ATP</name>
        <dbReference type="ChEBI" id="CHEBI:30616"/>
    </ligand>
</feature>
<feature type="binding site" evidence="1">
    <location>
        <begin position="353"/>
        <end position="356"/>
    </location>
    <ligand>
        <name>ATP</name>
        <dbReference type="ChEBI" id="CHEBI:30616"/>
    </ligand>
</feature>
<feature type="sequence conflict" description="In Ref. 1; AAF71544." evidence="2" ref="1">
    <original>A</original>
    <variation>P</variation>
    <location>
        <position position="101"/>
    </location>
</feature>
<feature type="sequence conflict" description="In Ref. 1; AAF71544." evidence="2" ref="1">
    <original>H</original>
    <variation>N</variation>
    <location>
        <position position="161"/>
    </location>
</feature>
<feature type="sequence conflict" description="In Ref. 1; AAF71544." evidence="2" ref="1">
    <original>R</original>
    <variation>S</variation>
    <location>
        <position position="325"/>
    </location>
</feature>